<protein>
    <recommendedName>
        <fullName evidence="3">Rothein 3.3</fullName>
    </recommendedName>
</protein>
<dbReference type="GO" id="GO:0005576">
    <property type="term" value="C:extracellular region"/>
    <property type="evidence" value="ECO:0000314"/>
    <property type="project" value="UniProtKB"/>
</dbReference>
<dbReference type="GO" id="GO:0006952">
    <property type="term" value="P:defense response"/>
    <property type="evidence" value="ECO:0007669"/>
    <property type="project" value="UniProtKB-KW"/>
</dbReference>
<proteinExistence type="evidence at protein level"/>
<sequence length="30" mass="2953">ASAAGAVRAGDDETLLNPVLNSLDNLVSGL</sequence>
<keyword id="KW-0027">Amidation</keyword>
<keyword id="KW-0878">Amphibian defense peptide</keyword>
<keyword id="KW-0903">Direct protein sequencing</keyword>
<keyword id="KW-0964">Secreted</keyword>
<organism>
    <name type="scientific">Litoria rothii</name>
    <name type="common">Roth's tree frog</name>
    <name type="synonym">Hyla rothii</name>
    <dbReference type="NCBI Taxonomy" id="336074"/>
    <lineage>
        <taxon>Eukaryota</taxon>
        <taxon>Metazoa</taxon>
        <taxon>Chordata</taxon>
        <taxon>Craniata</taxon>
        <taxon>Vertebrata</taxon>
        <taxon>Euteleostomi</taxon>
        <taxon>Amphibia</taxon>
        <taxon>Batrachia</taxon>
        <taxon>Anura</taxon>
        <taxon>Neobatrachia</taxon>
        <taxon>Hyloidea</taxon>
        <taxon>Hylidae</taxon>
        <taxon>Pelodryadinae</taxon>
        <taxon>Litoria</taxon>
    </lineage>
</organism>
<evidence type="ECO:0000269" key="1">
    <source>
    </source>
</evidence>
<evidence type="ECO:0000269" key="2">
    <source>
    </source>
</evidence>
<evidence type="ECO:0000303" key="3">
    <source>
    </source>
</evidence>
<evidence type="ECO:0000305" key="4"/>
<name>ROT33_LITRO</name>
<feature type="peptide" id="PRO_0000394439" description="Rothein 3.3" evidence="1">
    <location>
        <begin position="1"/>
        <end position="30"/>
    </location>
</feature>
<feature type="modified residue" description="Leucine amide" evidence="1">
    <location>
        <position position="30"/>
    </location>
</feature>
<reference evidence="4" key="1">
    <citation type="journal article" date="2005" name="Rapid Commun. Mass Spectrom.">
        <title>The rothein peptides from the skin secretion of Roth's tree frog Litoria rothii. Sequence determination using positive and negative ion electrospray mass spectrometry.</title>
        <authorList>
            <person name="Brinkworth C.S."/>
            <person name="Bowie J.H."/>
            <person name="Bilusich D."/>
            <person name="Tyler M.J."/>
        </authorList>
    </citation>
    <scope>PROTEIN SEQUENCE</scope>
    <scope>SUBCELLULAR LOCATION</scope>
    <scope>TISSUE SPECIFICITY</scope>
    <scope>MASS SPECTROMETRY</scope>
    <scope>AMIDATION AT LEU-30</scope>
    <source>
        <tissue evidence="1">Skin secretion</tissue>
    </source>
</reference>
<reference evidence="4" key="2">
    <citation type="journal article" date="2009" name="Toxicon">
        <title>Activities of seasonably variable caerulein and rothein skin peptides from the tree frogs Litoria splendida and Litoria rothii.</title>
        <authorList>
            <person name="Sherman P.J."/>
            <person name="Jackway R.J."/>
            <person name="Nicholson E."/>
            <person name="Musgrave I.F."/>
            <person name="Boontheung P."/>
            <person name="Bowie J.H."/>
        </authorList>
    </citation>
    <scope>FUNCTION</scope>
</reference>
<comment type="function">
    <text evidence="2">Lacks antimicrobial activity. Does not inhibit the formation of NO by neuronal nitric oxide.</text>
</comment>
<comment type="subcellular location">
    <subcellularLocation>
        <location evidence="1">Secreted</location>
    </subcellularLocation>
</comment>
<comment type="tissue specificity">
    <text evidence="1">Expressed by the skin dorsal glands.</text>
</comment>
<comment type="mass spectrometry" mass="2950.0" method="Electrospray" evidence="1"/>
<comment type="similarity">
    <text evidence="4">Belongs to the frog skin active peptide (FSAP) family. Rothein subfamily.</text>
</comment>
<accession>P86513</accession>